<feature type="chain" id="PRO_0000215360" description="Transient-receptor-potential-like protein">
    <location>
        <begin position="1"/>
        <end position="1027"/>
    </location>
</feature>
<feature type="transmembrane region" description="Helical" evidence="2">
    <location>
        <begin position="355"/>
        <end position="375"/>
    </location>
</feature>
<feature type="transmembrane region" description="Helical" evidence="2">
    <location>
        <begin position="391"/>
        <end position="411"/>
    </location>
</feature>
<feature type="transmembrane region" description="Helical" evidence="2">
    <location>
        <begin position="473"/>
        <end position="493"/>
    </location>
</feature>
<feature type="transmembrane region" description="Helical" evidence="2">
    <location>
        <begin position="516"/>
        <end position="536"/>
    </location>
</feature>
<feature type="transmembrane region" description="Helical" evidence="2">
    <location>
        <begin position="559"/>
        <end position="579"/>
    </location>
</feature>
<feature type="transmembrane region" description="Helical" evidence="2">
    <location>
        <begin position="640"/>
        <end position="660"/>
    </location>
</feature>
<feature type="repeat" description="ANK 1">
    <location>
        <begin position="85"/>
        <end position="115"/>
    </location>
</feature>
<feature type="repeat" description="ANK 2">
    <location>
        <begin position="117"/>
        <end position="141"/>
    </location>
</feature>
<feature type="repeat" description="ANK 3">
    <location>
        <begin position="163"/>
        <end position="192"/>
    </location>
</feature>
<feature type="region of interest" description="Disordered" evidence="3">
    <location>
        <begin position="1"/>
        <end position="22"/>
    </location>
</feature>
<feature type="region of interest" description="Disordered" evidence="3">
    <location>
        <begin position="825"/>
        <end position="929"/>
    </location>
</feature>
<feature type="region of interest" description="Disordered" evidence="3">
    <location>
        <begin position="1008"/>
        <end position="1027"/>
    </location>
</feature>
<feature type="compositionally biased region" description="Acidic residues" evidence="3">
    <location>
        <begin position="855"/>
        <end position="874"/>
    </location>
</feature>
<feature type="compositionally biased region" description="Basic and acidic residues" evidence="3">
    <location>
        <begin position="910"/>
        <end position="923"/>
    </location>
</feature>
<feature type="compositionally biased region" description="Polar residues" evidence="3">
    <location>
        <begin position="1008"/>
        <end position="1017"/>
    </location>
</feature>
<name>TRPL_CAEEL</name>
<keyword id="KW-0040">ANK repeat</keyword>
<keyword id="KW-0407">Ion channel</keyword>
<keyword id="KW-0406">Ion transport</keyword>
<keyword id="KW-0472">Membrane</keyword>
<keyword id="KW-1185">Reference proteome</keyword>
<keyword id="KW-0677">Repeat</keyword>
<keyword id="KW-0812">Transmembrane</keyword>
<keyword id="KW-1133">Transmembrane helix</keyword>
<keyword id="KW-0813">Transport</keyword>
<sequence length="1027" mass="118102">MTKEGMLSAAGRRFSRCAPSPRPRRNYALANIPPPAAVHIRTNDMISPEERRFLEAAELGNKPTLQECLDYDGDRRLNVNCLDSMGRTALEIAVDNENMEVVELLLQQPDIRIGNALLCAIREGVYRLVEVLVNHPNITREMLGDGWSQALDPSEAASAEYSSDISPVILAAQLNQFEILQMLIRKDASIEKPHRHSCICETCDRERLNDSLQYSLKRINTFRALASPAWMSLTSPDPILSAFKLSWDLQRLAFEEHEFKETYLQLSEQCKQYSCDLLSQCRSSEEVIAILNKDGNVNDDNIDVWASKLSLSRLKLAIKYEQKAFVSHPHCQQLLTSIWYEGIPYRQRSGTWANFFLYAFLLFLWPIFCLMYILMPKSRLGRLVRSPFMKFFYYSVSFATFLGLLTWATFEDYRYEKGERGGMTRASDRGPPATWVESLVFTWVIGMLWSEIKQLWEEGFKRYMRQWWNWLDFLMICLYLCTISIRLSAYYIFTYREDPYRYTVRTYWTSEEPMLVAEALFAVGNVFSFARIIYLFQTNPYLGPLQISLGCMLVDVAKFCFIFVLIISSFSIGLAQLYWYYDPNTDVCLPGATCKHSSNVFSSIADSYLTLLWSLFSITKPEDTDVVENHKITQWVGQGMFIMYHCTSIIVLLNMLIAMMSHSFQIINDHADLEWKFHRTKLWMAHFDEGSSLPPPFNIIVTPKSLIYVMNCLFNTVRWLLGKYTYQKNRNRATIRRPGYSRKRNEMEKSGGHDDDSLKPLTYADIITRLVARFIHQTKKDMKMDGVNEDDLHEIKQDISSLRYELRDDRRREIVRSSSHIDAVKRDIMRTMSTTSRRPYGGSMRLPKTRPSVAEESEEDDKSDETSSTDEEADETRSRKSSVLYIPPVNSTLPGIISEEAPVKKSTKRRASEADSKLPDRPLSDTYTSSFTPKLLPVFAQPPHSALRKTDTSMSFPINGTALDTSIVKPPRGVLRASQENLPAVELIETLKKEMNEKLDRLISGISENVKSPSPASHSHVGFNVEK</sequence>
<protein>
    <recommendedName>
        <fullName>Transient-receptor-potential-like protein</fullName>
    </recommendedName>
    <alternativeName>
        <fullName>TRP homologous cation channel protein 1</fullName>
    </alternativeName>
</protein>
<accession>P34586</accession>
<accession>P34585</accession>
<accession>Q8IG03</accession>
<evidence type="ECO:0000250" key="1"/>
<evidence type="ECO:0000255" key="2"/>
<evidence type="ECO:0000256" key="3">
    <source>
        <dbReference type="SAM" id="MobiDB-lite"/>
    </source>
</evidence>
<evidence type="ECO:0000305" key="4"/>
<dbReference type="EMBL" id="AJ276027">
    <property type="protein sequence ID" value="CAC81654.1"/>
    <property type="molecule type" value="mRNA"/>
</dbReference>
<dbReference type="EMBL" id="FO080281">
    <property type="protein sequence ID" value="CCD62572.1"/>
    <property type="molecule type" value="Genomic_DNA"/>
</dbReference>
<dbReference type="PIR" id="S44872">
    <property type="entry name" value="S44872"/>
</dbReference>
<dbReference type="RefSeq" id="NP_001040889.1">
    <property type="nucleotide sequence ID" value="NM_001047424.3"/>
</dbReference>
<dbReference type="SMR" id="P34586"/>
<dbReference type="BioGRID" id="41406">
    <property type="interactions" value="3"/>
</dbReference>
<dbReference type="FunCoup" id="P34586">
    <property type="interactions" value="1"/>
</dbReference>
<dbReference type="STRING" id="6239.ZC21.2b.1"/>
<dbReference type="PaxDb" id="6239-ZC21.2b"/>
<dbReference type="EnsemblMetazoa" id="ZC21.2a.1">
    <property type="protein sequence ID" value="ZC21.2a.1"/>
    <property type="gene ID" value="WBGene00006614"/>
</dbReference>
<dbReference type="GeneID" id="176202"/>
<dbReference type="KEGG" id="cel:CELE_ZC21.2"/>
<dbReference type="UCSC" id="ZC21.2a.2">
    <property type="organism name" value="c. elegans"/>
</dbReference>
<dbReference type="AGR" id="WB:WBGene00006614"/>
<dbReference type="CTD" id="176202"/>
<dbReference type="WormBase" id="ZC21.2a">
    <property type="protein sequence ID" value="CE33009"/>
    <property type="gene ID" value="WBGene00006614"/>
    <property type="gene designation" value="trp-1"/>
</dbReference>
<dbReference type="eggNOG" id="KOG3609">
    <property type="taxonomic scope" value="Eukaryota"/>
</dbReference>
<dbReference type="InParanoid" id="P34586"/>
<dbReference type="OrthoDB" id="2373987at2759"/>
<dbReference type="Reactome" id="R-CEL-114508">
    <property type="pathway name" value="Effects of PIP2 hydrolysis"/>
</dbReference>
<dbReference type="Reactome" id="R-CEL-139853">
    <property type="pathway name" value="Elevation of cytosolic Ca2+ levels"/>
</dbReference>
<dbReference type="Reactome" id="R-CEL-3295583">
    <property type="pathway name" value="TRP channels"/>
</dbReference>
<dbReference type="PRO" id="PR:P34586"/>
<dbReference type="Proteomes" id="UP000001940">
    <property type="component" value="Chromosome III"/>
</dbReference>
<dbReference type="Bgee" id="WBGene00006614">
    <property type="expression patterns" value="Expressed in larva and 4 other cell types or tissues"/>
</dbReference>
<dbReference type="ExpressionAtlas" id="P34586">
    <property type="expression patterns" value="baseline and differential"/>
</dbReference>
<dbReference type="GO" id="GO:0034703">
    <property type="term" value="C:cation channel complex"/>
    <property type="evidence" value="ECO:0000318"/>
    <property type="project" value="GO_Central"/>
</dbReference>
<dbReference type="GO" id="GO:0005886">
    <property type="term" value="C:plasma membrane"/>
    <property type="evidence" value="ECO:0000318"/>
    <property type="project" value="GO_Central"/>
</dbReference>
<dbReference type="GO" id="GO:0070679">
    <property type="term" value="F:inositol 1,4,5 trisphosphate binding"/>
    <property type="evidence" value="ECO:0000318"/>
    <property type="project" value="GO_Central"/>
</dbReference>
<dbReference type="GO" id="GO:0015279">
    <property type="term" value="F:store-operated calcium channel activity"/>
    <property type="evidence" value="ECO:0000318"/>
    <property type="project" value="GO_Central"/>
</dbReference>
<dbReference type="GO" id="GO:0070588">
    <property type="term" value="P:calcium ion transmembrane transport"/>
    <property type="evidence" value="ECO:0000318"/>
    <property type="project" value="GO_Central"/>
</dbReference>
<dbReference type="GO" id="GO:0051480">
    <property type="term" value="P:regulation of cytosolic calcium ion concentration"/>
    <property type="evidence" value="ECO:0000318"/>
    <property type="project" value="GO_Central"/>
</dbReference>
<dbReference type="GO" id="GO:0007338">
    <property type="term" value="P:single fertilization"/>
    <property type="evidence" value="ECO:0000318"/>
    <property type="project" value="GO_Central"/>
</dbReference>
<dbReference type="FunFam" id="1.25.40.20:FF:000604">
    <property type="entry name" value="CBN-TRP-1 protein"/>
    <property type="match status" value="1"/>
</dbReference>
<dbReference type="FunFam" id="1.10.287.70:FF:000266">
    <property type="entry name" value="Transient receptor potential cation channel subfamily c member 1"/>
    <property type="match status" value="1"/>
</dbReference>
<dbReference type="Gene3D" id="1.25.40.20">
    <property type="entry name" value="Ankyrin repeat-containing domain"/>
    <property type="match status" value="1"/>
</dbReference>
<dbReference type="InterPro" id="IPR002110">
    <property type="entry name" value="Ankyrin_rpt"/>
</dbReference>
<dbReference type="InterPro" id="IPR036770">
    <property type="entry name" value="Ankyrin_rpt-contain_sf"/>
</dbReference>
<dbReference type="InterPro" id="IPR005821">
    <property type="entry name" value="Ion_trans_dom"/>
</dbReference>
<dbReference type="InterPro" id="IPR013555">
    <property type="entry name" value="TRP_dom"/>
</dbReference>
<dbReference type="InterPro" id="IPR002153">
    <property type="entry name" value="TRPC_channel"/>
</dbReference>
<dbReference type="NCBIfam" id="TIGR00870">
    <property type="entry name" value="trp"/>
    <property type="match status" value="1"/>
</dbReference>
<dbReference type="PANTHER" id="PTHR10117">
    <property type="entry name" value="TRANSIENT RECEPTOR POTENTIAL CHANNEL"/>
    <property type="match status" value="1"/>
</dbReference>
<dbReference type="PANTHER" id="PTHR10117:SF80">
    <property type="entry name" value="TRANSIENT-RECEPTOR-POTENTIAL-LIKE PROTEIN"/>
    <property type="match status" value="1"/>
</dbReference>
<dbReference type="Pfam" id="PF12796">
    <property type="entry name" value="Ank_2"/>
    <property type="match status" value="1"/>
</dbReference>
<dbReference type="Pfam" id="PF00520">
    <property type="entry name" value="Ion_trans"/>
    <property type="match status" value="1"/>
</dbReference>
<dbReference type="Pfam" id="PF08344">
    <property type="entry name" value="TRP_2"/>
    <property type="match status" value="1"/>
</dbReference>
<dbReference type="PRINTS" id="PR01097">
    <property type="entry name" value="TRNSRECEPTRP"/>
</dbReference>
<dbReference type="SMART" id="SM00248">
    <property type="entry name" value="ANK"/>
    <property type="match status" value="2"/>
</dbReference>
<dbReference type="SMART" id="SM01420">
    <property type="entry name" value="TRP_2"/>
    <property type="match status" value="1"/>
</dbReference>
<dbReference type="SUPFAM" id="SSF48403">
    <property type="entry name" value="Ankyrin repeat"/>
    <property type="match status" value="1"/>
</dbReference>
<dbReference type="PROSITE" id="PS50297">
    <property type="entry name" value="ANK_REP_REGION"/>
    <property type="match status" value="1"/>
</dbReference>
<dbReference type="PROSITE" id="PS50088">
    <property type="entry name" value="ANK_REPEAT"/>
    <property type="match status" value="1"/>
</dbReference>
<gene>
    <name type="primary">trp-1</name>
    <name type="synonym">strpc1</name>
    <name type="ORF">ZC21.2/ZC21.1</name>
</gene>
<proteinExistence type="evidence at transcript level"/>
<organism>
    <name type="scientific">Caenorhabditis elegans</name>
    <dbReference type="NCBI Taxonomy" id="6239"/>
    <lineage>
        <taxon>Eukaryota</taxon>
        <taxon>Metazoa</taxon>
        <taxon>Ecdysozoa</taxon>
        <taxon>Nematoda</taxon>
        <taxon>Chromadorea</taxon>
        <taxon>Rhabditida</taxon>
        <taxon>Rhabditina</taxon>
        <taxon>Rhabditomorpha</taxon>
        <taxon>Rhabditoidea</taxon>
        <taxon>Rhabditidae</taxon>
        <taxon>Peloderinae</taxon>
        <taxon>Caenorhabditis</taxon>
    </lineage>
</organism>
<comment type="function">
    <text evidence="1">Could mediate calcium entry and form a calcium permeant channel.</text>
</comment>
<comment type="subcellular location">
    <subcellularLocation>
        <location evidence="4">Membrane</location>
        <topology evidence="4">Multi-pass membrane protein</topology>
    </subcellularLocation>
</comment>
<comment type="similarity">
    <text evidence="4">Belongs to the transient receptor (TC 1.A.4) family. STrpC subfamily.</text>
</comment>
<reference key="1">
    <citation type="submission" date="2000-03" db="EMBL/GenBank/DDBJ databases">
        <title>Cloning and functional expression of C. elegans TRP isoforms.</title>
        <authorList>
            <person name="Harteneck C."/>
            <person name="Schultz G."/>
        </authorList>
    </citation>
    <scope>NUCLEOTIDE SEQUENCE [MRNA]</scope>
</reference>
<reference key="2">
    <citation type="journal article" date="1994" name="Nature">
        <title>2.2 Mb of contiguous nucleotide sequence from chromosome III of C. elegans.</title>
        <authorList>
            <person name="Wilson R."/>
            <person name="Ainscough R."/>
            <person name="Anderson K."/>
            <person name="Baynes C."/>
            <person name="Berks M."/>
            <person name="Bonfield J."/>
            <person name="Burton J."/>
            <person name="Connell M."/>
            <person name="Copsey T."/>
            <person name="Cooper J."/>
            <person name="Coulson A."/>
            <person name="Craxton M."/>
            <person name="Dear S."/>
            <person name="Du Z."/>
            <person name="Durbin R."/>
            <person name="Favello A."/>
            <person name="Fraser A."/>
            <person name="Fulton L."/>
            <person name="Gardner A."/>
            <person name="Green P."/>
            <person name="Hawkins T."/>
            <person name="Hillier L."/>
            <person name="Jier M."/>
            <person name="Johnston L."/>
            <person name="Jones M."/>
            <person name="Kershaw J."/>
            <person name="Kirsten J."/>
            <person name="Laisster N."/>
            <person name="Latreille P."/>
            <person name="Lightning J."/>
            <person name="Lloyd C."/>
            <person name="Mortimore B."/>
            <person name="O'Callaghan M."/>
            <person name="Parsons J."/>
            <person name="Percy C."/>
            <person name="Rifken L."/>
            <person name="Roopra A."/>
            <person name="Saunders D."/>
            <person name="Shownkeen R."/>
            <person name="Sims M."/>
            <person name="Smaldon N."/>
            <person name="Smith A."/>
            <person name="Smith M."/>
            <person name="Sonnhammer E."/>
            <person name="Staden R."/>
            <person name="Sulston J."/>
            <person name="Thierry-Mieg J."/>
            <person name="Thomas K."/>
            <person name="Vaudin M."/>
            <person name="Vaughan K."/>
            <person name="Waterston R."/>
            <person name="Watson A."/>
            <person name="Weinstock L."/>
            <person name="Wilkinson-Sproat J."/>
            <person name="Wohldman P."/>
        </authorList>
    </citation>
    <scope>NUCLEOTIDE SEQUENCE [LARGE SCALE GENOMIC DNA]</scope>
    <source>
        <strain>Bristol N2</strain>
    </source>
</reference>
<reference key="3">
    <citation type="journal article" date="1998" name="Science">
        <title>Genome sequence of the nematode C. elegans: a platform for investigating biology.</title>
        <authorList>
            <consortium name="The C. elegans sequencing consortium"/>
        </authorList>
    </citation>
    <scope>NUCLEOTIDE SEQUENCE [LARGE SCALE GENOMIC DNA]</scope>
    <source>
        <strain>Bristol N2</strain>
    </source>
</reference>